<keyword id="KW-0066">ATP synthesis</keyword>
<keyword id="KW-0067">ATP-binding</keyword>
<keyword id="KW-0139">CF(1)</keyword>
<keyword id="KW-0150">Chloroplast</keyword>
<keyword id="KW-0375">Hydrogen ion transport</keyword>
<keyword id="KW-0406">Ion transport</keyword>
<keyword id="KW-0472">Membrane</keyword>
<keyword id="KW-0547">Nucleotide-binding</keyword>
<keyword id="KW-0934">Plastid</keyword>
<keyword id="KW-0793">Thylakoid</keyword>
<keyword id="KW-1278">Translocase</keyword>
<keyword id="KW-0813">Transport</keyword>
<dbReference type="EC" id="7.1.2.2" evidence="1"/>
<dbReference type="EMBL" id="U93829">
    <property type="protein sequence ID" value="AAB51737.2"/>
    <property type="molecule type" value="Genomic_DNA"/>
</dbReference>
<dbReference type="GO" id="GO:0009535">
    <property type="term" value="C:chloroplast thylakoid membrane"/>
    <property type="evidence" value="ECO:0007669"/>
    <property type="project" value="UniProtKB-SubCell"/>
</dbReference>
<dbReference type="GO" id="GO:0005739">
    <property type="term" value="C:mitochondrion"/>
    <property type="evidence" value="ECO:0007669"/>
    <property type="project" value="GOC"/>
</dbReference>
<dbReference type="GO" id="GO:0045259">
    <property type="term" value="C:proton-transporting ATP synthase complex"/>
    <property type="evidence" value="ECO:0007669"/>
    <property type="project" value="UniProtKB-KW"/>
</dbReference>
<dbReference type="GO" id="GO:0005524">
    <property type="term" value="F:ATP binding"/>
    <property type="evidence" value="ECO:0007669"/>
    <property type="project" value="UniProtKB-KW"/>
</dbReference>
<dbReference type="GO" id="GO:0016887">
    <property type="term" value="F:ATP hydrolysis activity"/>
    <property type="evidence" value="ECO:0007669"/>
    <property type="project" value="InterPro"/>
</dbReference>
<dbReference type="GO" id="GO:0046933">
    <property type="term" value="F:proton-transporting ATP synthase activity, rotational mechanism"/>
    <property type="evidence" value="ECO:0007669"/>
    <property type="project" value="InterPro"/>
</dbReference>
<dbReference type="GO" id="GO:0042776">
    <property type="term" value="P:proton motive force-driven mitochondrial ATP synthesis"/>
    <property type="evidence" value="ECO:0007669"/>
    <property type="project" value="TreeGrafter"/>
</dbReference>
<dbReference type="CDD" id="cd18110">
    <property type="entry name" value="ATP-synt_F1_beta_C"/>
    <property type="match status" value="1"/>
</dbReference>
<dbReference type="CDD" id="cd18115">
    <property type="entry name" value="ATP-synt_F1_beta_N"/>
    <property type="match status" value="1"/>
</dbReference>
<dbReference type="CDD" id="cd01133">
    <property type="entry name" value="F1-ATPase_beta_CD"/>
    <property type="match status" value="1"/>
</dbReference>
<dbReference type="FunFam" id="1.10.1140.10:FF:000001">
    <property type="entry name" value="ATP synthase subunit beta"/>
    <property type="match status" value="1"/>
</dbReference>
<dbReference type="FunFam" id="3.40.50.300:FF:000004">
    <property type="entry name" value="ATP synthase subunit beta"/>
    <property type="match status" value="1"/>
</dbReference>
<dbReference type="FunFam" id="2.40.10.170:FF:000002">
    <property type="entry name" value="ATP synthase subunit beta, chloroplastic"/>
    <property type="match status" value="1"/>
</dbReference>
<dbReference type="Gene3D" id="2.40.10.170">
    <property type="match status" value="1"/>
</dbReference>
<dbReference type="Gene3D" id="1.10.1140.10">
    <property type="entry name" value="Bovine Mitochondrial F1-atpase, Atp Synthase Beta Chain, Chain D, domain 3"/>
    <property type="match status" value="1"/>
</dbReference>
<dbReference type="Gene3D" id="3.40.50.300">
    <property type="entry name" value="P-loop containing nucleotide triphosphate hydrolases"/>
    <property type="match status" value="1"/>
</dbReference>
<dbReference type="HAMAP" id="MF_01347">
    <property type="entry name" value="ATP_synth_beta_bact"/>
    <property type="match status" value="1"/>
</dbReference>
<dbReference type="InterPro" id="IPR003593">
    <property type="entry name" value="AAA+_ATPase"/>
</dbReference>
<dbReference type="InterPro" id="IPR055190">
    <property type="entry name" value="ATP-synt_VA_C"/>
</dbReference>
<dbReference type="InterPro" id="IPR005722">
    <property type="entry name" value="ATP_synth_F1_bsu"/>
</dbReference>
<dbReference type="InterPro" id="IPR020003">
    <property type="entry name" value="ATPase_a/bsu_AS"/>
</dbReference>
<dbReference type="InterPro" id="IPR050053">
    <property type="entry name" value="ATPase_alpha/beta_chains"/>
</dbReference>
<dbReference type="InterPro" id="IPR004100">
    <property type="entry name" value="ATPase_F1/V1/A1_a/bsu_N"/>
</dbReference>
<dbReference type="InterPro" id="IPR036121">
    <property type="entry name" value="ATPase_F1/V1/A1_a/bsu_N_sf"/>
</dbReference>
<dbReference type="InterPro" id="IPR000194">
    <property type="entry name" value="ATPase_F1/V1/A1_a/bsu_nucl-bd"/>
</dbReference>
<dbReference type="InterPro" id="IPR024034">
    <property type="entry name" value="ATPase_F1/V1_b/a_C"/>
</dbReference>
<dbReference type="InterPro" id="IPR027417">
    <property type="entry name" value="P-loop_NTPase"/>
</dbReference>
<dbReference type="NCBIfam" id="TIGR01039">
    <property type="entry name" value="atpD"/>
    <property type="match status" value="1"/>
</dbReference>
<dbReference type="PANTHER" id="PTHR15184">
    <property type="entry name" value="ATP SYNTHASE"/>
    <property type="match status" value="1"/>
</dbReference>
<dbReference type="PANTHER" id="PTHR15184:SF71">
    <property type="entry name" value="ATP SYNTHASE SUBUNIT BETA, MITOCHONDRIAL"/>
    <property type="match status" value="1"/>
</dbReference>
<dbReference type="Pfam" id="PF00006">
    <property type="entry name" value="ATP-synt_ab"/>
    <property type="match status" value="1"/>
</dbReference>
<dbReference type="Pfam" id="PF02874">
    <property type="entry name" value="ATP-synt_ab_N"/>
    <property type="match status" value="1"/>
</dbReference>
<dbReference type="Pfam" id="PF22919">
    <property type="entry name" value="ATP-synt_VA_C"/>
    <property type="match status" value="1"/>
</dbReference>
<dbReference type="SMART" id="SM00382">
    <property type="entry name" value="AAA"/>
    <property type="match status" value="1"/>
</dbReference>
<dbReference type="SUPFAM" id="SSF47917">
    <property type="entry name" value="C-terminal domain of alpha and beta subunits of F1 ATP synthase"/>
    <property type="match status" value="1"/>
</dbReference>
<dbReference type="SUPFAM" id="SSF50615">
    <property type="entry name" value="N-terminal domain of alpha and beta subunits of F1 ATP synthase"/>
    <property type="match status" value="1"/>
</dbReference>
<dbReference type="SUPFAM" id="SSF52540">
    <property type="entry name" value="P-loop containing nucleoside triphosphate hydrolases"/>
    <property type="match status" value="1"/>
</dbReference>
<dbReference type="PROSITE" id="PS00152">
    <property type="entry name" value="ATPASE_ALPHA_BETA"/>
    <property type="match status" value="1"/>
</dbReference>
<sequence length="476" mass="50965">VGYITQIIGPVLDVAPSPGKMPNIYNSLIVKGRNPAGQDINVTCEVQQLLGNNEVRAVXMSATDGLMRGMGAVDTGAPLSVPVGEITPGRISNVLGEPVDNLGPVESSTTFPIHRSAPAFTQLDTKLSIFETGIKVVDLLAPYRRGGKIGLFGGAGVGKTVLIMELINNIAKAHGGVSVSGGVGERTREGNDLYMETKESKVINEQNLSESKVALVYGQMNEPPGARMRVGSTAPTMAEYFRDVNKQDVLLFIDNIFRFVQAGSEVSALSGRMPSAVGYQPTLGTEMGCLQERITSTKEGSITSIQAVYVPADDLTDPAPATTFAHLDATTVLSRGLAAKGIYPAVDPLDSTSTMLQPWIVGEEHYETAQGVKQTLQRYKEPQDIIAIPGLDELSEEDRLTVARARKIERFLSQPFLVAEVFTGSPGKYVSLLETIKGFQMILPGELDNLPEQAFYLVGNIDEATAKAATLQVEGQ</sequence>
<reference key="1">
    <citation type="submission" date="2000-01" db="EMBL/GenBank/DDBJ databases">
        <authorList>
            <person name="Wolf P.G."/>
            <person name="Su P.-H."/>
        </authorList>
    </citation>
    <scope>NUCLEOTIDE SEQUENCE [GENOMIC DNA]</scope>
    <scope>SEQUENCE REVISION TO N-TERMINUS; 37-38 AND 59</scope>
</reference>
<reference key="2">
    <citation type="journal article" date="1997" name="Am. J. Bot.">
        <title>Evaluation of atpB nucleotide sequences for phylogenetic studies of ferns and other pteridophytes.</title>
        <authorList>
            <person name="Wolf P.G."/>
        </authorList>
    </citation>
    <scope>NUCLEOTIDE SEQUENCE [GENOMIC DNA] OF 26-454</scope>
    <source>
        <tissue>Frond</tissue>
    </source>
</reference>
<proteinExistence type="inferred from homology"/>
<organism>
    <name type="scientific">Dicksonia antarctica</name>
    <name type="common">Australian tree fern</name>
    <dbReference type="NCBI Taxonomy" id="3271"/>
    <lineage>
        <taxon>Eukaryota</taxon>
        <taxon>Viridiplantae</taxon>
        <taxon>Streptophyta</taxon>
        <taxon>Embryophyta</taxon>
        <taxon>Tracheophyta</taxon>
        <taxon>Polypodiopsida</taxon>
        <taxon>Polypodiidae</taxon>
        <taxon>Cyatheales</taxon>
        <taxon>Dicksoniaceae</taxon>
        <taxon>Dicksonia</taxon>
    </lineage>
</organism>
<gene>
    <name evidence="1" type="primary">atpB</name>
</gene>
<comment type="function">
    <text evidence="1">Produces ATP from ADP in the presence of a proton gradient across the membrane. The catalytic sites are hosted primarily by the beta subunits.</text>
</comment>
<comment type="catalytic activity">
    <reaction evidence="1">
        <text>ATP + H2O + 4 H(+)(in) = ADP + phosphate + 5 H(+)(out)</text>
        <dbReference type="Rhea" id="RHEA:57720"/>
        <dbReference type="ChEBI" id="CHEBI:15377"/>
        <dbReference type="ChEBI" id="CHEBI:15378"/>
        <dbReference type="ChEBI" id="CHEBI:30616"/>
        <dbReference type="ChEBI" id="CHEBI:43474"/>
        <dbReference type="ChEBI" id="CHEBI:456216"/>
        <dbReference type="EC" id="7.1.2.2"/>
    </reaction>
</comment>
<comment type="subunit">
    <text evidence="1">F-type ATPases have 2 components, CF(1) - the catalytic core - and CF(0) - the membrane proton channel. CF(1) has five subunits: alpha(3), beta(3), gamma(1), delta(1), epsilon(1). CF(0) has four main subunits: a(1), b(1), b'(1) and c(9-12).</text>
</comment>
<comment type="subcellular location">
    <subcellularLocation>
        <location evidence="1">Plastid</location>
        <location evidence="1">Chloroplast thylakoid membrane</location>
        <topology evidence="1">Peripheral membrane protein</topology>
    </subcellularLocation>
</comment>
<comment type="similarity">
    <text evidence="1">Belongs to the ATPase alpha/beta chains family.</text>
</comment>
<evidence type="ECO:0000255" key="1">
    <source>
        <dbReference type="HAMAP-Rule" id="MF_01347"/>
    </source>
</evidence>
<accession>O03067</accession>
<name>ATPB_DICAN</name>
<protein>
    <recommendedName>
        <fullName evidence="1">ATP synthase subunit beta, chloroplastic</fullName>
        <ecNumber evidence="1">7.1.2.2</ecNumber>
    </recommendedName>
    <alternativeName>
        <fullName evidence="1">ATP synthase F1 sector subunit beta</fullName>
    </alternativeName>
    <alternativeName>
        <fullName evidence="1">F-ATPase subunit beta</fullName>
    </alternativeName>
</protein>
<geneLocation type="chloroplast"/>
<feature type="chain" id="PRO_0000144510" description="ATP synthase subunit beta, chloroplastic">
    <location>
        <begin position="1" status="less than"/>
        <end position="476"/>
    </location>
</feature>
<feature type="binding site" evidence="1">
    <location>
        <begin position="153"/>
        <end position="160"/>
    </location>
    <ligand>
        <name>ATP</name>
        <dbReference type="ChEBI" id="CHEBI:30616"/>
    </ligand>
</feature>
<feature type="non-terminal residue">
    <location>
        <position position="1"/>
    </location>
</feature>